<gene>
    <name evidence="6 7" type="primary">PROSCOOP9</name>
    <name evidence="6 7" type="synonym">SCOOP9</name>
    <name evidence="10" type="ordered locus">At5g44578</name>
    <name evidence="11" type="ORF">K15C23</name>
</gene>
<proteinExistence type="evidence at transcript level"/>
<name>SCOP9_ARATH</name>
<keyword id="KW-0052">Apoplast</keyword>
<keyword id="KW-1003">Cell membrane</keyword>
<keyword id="KW-0165">Cleavage on pair of basic residues</keyword>
<keyword id="KW-0472">Membrane</keyword>
<keyword id="KW-1185">Reference proteome</keyword>
<keyword id="KW-0964">Secreted</keyword>
<keyword id="KW-0732">Signal</keyword>
<sequence length="103" mass="11437">MENIFFSKLTQVFIVALLCIFIYRTESAMSSHREQLSLTGRRMMANIPYPYGGIYVKPPPLKSKDSNQKGKRGETYYKPNSEIGTGPSHSGHGGSSIEHVSSP</sequence>
<comment type="function">
    <text evidence="4">Brassicaceae-specific phytocytokine (plant endogenous peptide released into the apoplast) perceived by MIK2 in a BAK1/SERK3 and SERK4 coreceptors-dependent manner, that modulates various physiological and antimicrobial processes including growth prevention and reactive oxygen species (ROS) response regulation.</text>
</comment>
<comment type="subunit">
    <text evidence="1">Interacts with MIK2 (via extracellular leucine-rich repeat domain); this interaction triggers the formation of complex between MIK2 and the BAK1/SERK3 and SERK4 coreceptors, and subsequent BAK1 activation by phosphorylation.</text>
</comment>
<comment type="subcellular location">
    <subcellularLocation>
        <location evidence="1">Cell membrane</location>
    </subcellularLocation>
    <subcellularLocation>
        <location evidence="1">Secreted</location>
        <location evidence="1">Extracellular space</location>
        <location evidence="1">Apoplast</location>
    </subcellularLocation>
    <text evidence="1">The precursor of SCOOP1, PROSCOOP1, accumulates at the plasma membrane and is proteolytically cleaved to release the SCOOP1 in the apoplasm.</text>
</comment>
<comment type="tissue specificity">
    <text evidence="5">Mostly expressed in seedlings shoots and roots, and, to a lower extent, in leaves, but barely in flowers.</text>
</comment>
<comment type="similarity">
    <text evidence="8">Belongs to the serine rich endogenous peptide (SCOOP) phytocytokine family.</text>
</comment>
<feature type="signal peptide" evidence="2">
    <location>
        <begin position="1"/>
        <end position="25"/>
    </location>
</feature>
<feature type="propeptide" id="PRO_0000457230" description="Removed in mature form" evidence="1">
    <location>
        <begin position="26"/>
        <end status="unknown"/>
    </location>
</feature>
<feature type="peptide" id="PRO_0000457231" description="Serine rich endogenous peptide 9" evidence="1">
    <location>
        <begin status="unknown"/>
        <end position="103"/>
    </location>
</feature>
<feature type="region of interest" description="Disordered" evidence="3">
    <location>
        <begin position="54"/>
        <end position="103"/>
    </location>
</feature>
<feature type="short sequence motif" description="SCOOP motif" evidence="9">
    <location>
        <begin position="82"/>
        <end position="96"/>
    </location>
</feature>
<feature type="short sequence motif" description="SxS motif essential for MIK2 binding" evidence="1">
    <location>
        <begin position="88"/>
        <end position="90"/>
    </location>
</feature>
<feature type="compositionally biased region" description="Basic and acidic residues" evidence="3">
    <location>
        <begin position="62"/>
        <end position="75"/>
    </location>
</feature>
<feature type="compositionally biased region" description="Low complexity" evidence="3">
    <location>
        <begin position="84"/>
        <end position="103"/>
    </location>
</feature>
<accession>A8MQS5</accession>
<evidence type="ECO:0000250" key="1">
    <source>
        <dbReference type="UniProtKB" id="B3H7I1"/>
    </source>
</evidence>
<evidence type="ECO:0000255" key="2"/>
<evidence type="ECO:0000256" key="3">
    <source>
        <dbReference type="SAM" id="MobiDB-lite"/>
    </source>
</evidence>
<evidence type="ECO:0000269" key="4">
    <source>
    </source>
</evidence>
<evidence type="ECO:0000269" key="5">
    <source>
    </source>
</evidence>
<evidence type="ECO:0000303" key="6">
    <source>
    </source>
</evidence>
<evidence type="ECO:0000303" key="7">
    <source>
    </source>
</evidence>
<evidence type="ECO:0000305" key="8"/>
<evidence type="ECO:0000305" key="9">
    <source>
    </source>
</evidence>
<evidence type="ECO:0000312" key="10">
    <source>
        <dbReference type="Araport" id="AT5G44578"/>
    </source>
</evidence>
<evidence type="ECO:0000312" key="11">
    <source>
        <dbReference type="EMBL" id="AB024024"/>
    </source>
</evidence>
<dbReference type="EMBL" id="AB024024">
    <property type="status" value="NOT_ANNOTATED_CDS"/>
    <property type="molecule type" value="Genomic_DNA"/>
</dbReference>
<dbReference type="EMBL" id="CP002688">
    <property type="protein sequence ID" value="AED95132.1"/>
    <property type="molecule type" value="Genomic_DNA"/>
</dbReference>
<dbReference type="RefSeq" id="NP_001078713.1">
    <property type="nucleotide sequence ID" value="NM_001085244.3"/>
</dbReference>
<dbReference type="SMR" id="A8MQS5"/>
<dbReference type="PaxDb" id="3702-AT5G44578.1"/>
<dbReference type="PRIDE" id="A8MQS5"/>
<dbReference type="EnsemblPlants" id="AT5G44578.1">
    <property type="protein sequence ID" value="AT5G44578.1"/>
    <property type="gene ID" value="AT5G44578"/>
</dbReference>
<dbReference type="GeneID" id="5008300"/>
<dbReference type="Gramene" id="AT5G44578.1">
    <property type="protein sequence ID" value="AT5G44578.1"/>
    <property type="gene ID" value="AT5G44578"/>
</dbReference>
<dbReference type="KEGG" id="ath:AT5G44578"/>
<dbReference type="Araport" id="AT5G44578"/>
<dbReference type="TAIR" id="AT5G44578"/>
<dbReference type="HOGENOM" id="CLU_2309927_0_0_1"/>
<dbReference type="InParanoid" id="A8MQS5"/>
<dbReference type="OMA" id="MMANTPY"/>
<dbReference type="PhylomeDB" id="A8MQS5"/>
<dbReference type="PRO" id="PR:A8MQS5"/>
<dbReference type="Proteomes" id="UP000006548">
    <property type="component" value="Chromosome 5"/>
</dbReference>
<dbReference type="ExpressionAtlas" id="A8MQS5">
    <property type="expression patterns" value="baseline and differential"/>
</dbReference>
<dbReference type="GO" id="GO:0048046">
    <property type="term" value="C:apoplast"/>
    <property type="evidence" value="ECO:0000250"/>
    <property type="project" value="UniProtKB"/>
</dbReference>
<dbReference type="GO" id="GO:0005886">
    <property type="term" value="C:plasma membrane"/>
    <property type="evidence" value="ECO:0007669"/>
    <property type="project" value="UniProtKB-SubCell"/>
</dbReference>
<dbReference type="GO" id="GO:0030275">
    <property type="term" value="F:LRR domain binding"/>
    <property type="evidence" value="ECO:0000250"/>
    <property type="project" value="UniProtKB"/>
</dbReference>
<dbReference type="GO" id="GO:0033612">
    <property type="term" value="F:receptor serine/threonine kinase binding"/>
    <property type="evidence" value="ECO:0000250"/>
    <property type="project" value="UniProtKB"/>
</dbReference>
<reference key="1">
    <citation type="submission" date="1999-02" db="EMBL/GenBank/DDBJ databases">
        <title>Structural analysis of Arabidopsis thaliana chromosome 5. XI.</title>
        <authorList>
            <person name="Kaneko T."/>
            <person name="Katoh T."/>
            <person name="Asamizu E."/>
            <person name="Sato S."/>
            <person name="Nakamura Y."/>
            <person name="Kotani H."/>
            <person name="Tabata S."/>
        </authorList>
    </citation>
    <scope>NUCLEOTIDE SEQUENCE [LARGE SCALE GENOMIC DNA]</scope>
    <source>
        <strain>cv. Columbia</strain>
    </source>
</reference>
<reference key="2">
    <citation type="journal article" date="2017" name="Plant J.">
        <title>Araport11: a complete reannotation of the Arabidopsis thaliana reference genome.</title>
        <authorList>
            <person name="Cheng C.Y."/>
            <person name="Krishnakumar V."/>
            <person name="Chan A.P."/>
            <person name="Thibaud-Nissen F."/>
            <person name="Schobel S."/>
            <person name="Town C.D."/>
        </authorList>
    </citation>
    <scope>GENOME REANNOTATION</scope>
    <source>
        <strain>cv. Columbia</strain>
    </source>
</reference>
<reference key="3">
    <citation type="journal article" date="2019" name="J. Exp. Bot.">
        <title>The SCOOP12 peptide regulates defense response and root elongation in Arabidopsis thaliana.</title>
        <authorList>
            <person name="Gully K."/>
            <person name="Pelletier S."/>
            <person name="Guillou M.-C."/>
            <person name="Ferrand M."/>
            <person name="Aligon S."/>
            <person name="Pokotylo I."/>
            <person name="Perrin A."/>
            <person name="Vergne E."/>
            <person name="Fagard M."/>
            <person name="Ruelland E."/>
            <person name="Grappin P."/>
            <person name="Bucher E."/>
            <person name="Renou J.-P."/>
            <person name="Aubourg S."/>
        </authorList>
    </citation>
    <scope>GENE FAMILY</scope>
    <source>
        <strain>cv. Columbia</strain>
        <strain>cv. Wassilewskija</strain>
    </source>
</reference>
<reference key="4">
    <citation type="journal article" date="2021" name="Nat. Commun.">
        <title>Perception of a divergent family of phytocytokines by the Arabidopsis receptor kinase MIK2.</title>
        <authorList>
            <person name="Rhodes J."/>
            <person name="Yang H."/>
            <person name="Moussu S."/>
            <person name="Boutrot F."/>
            <person name="Santiago J."/>
            <person name="Zipfel C."/>
        </authorList>
    </citation>
    <scope>FUNCTION</scope>
    <scope>GENE FAMILY</scope>
    <source>
        <strain>cv. Columbia</strain>
        <strain>cv. Wassilewskija-2</strain>
    </source>
</reference>
<reference key="5">
    <citation type="journal article" date="2021" name="Nat. Commun.">
        <title>The Arabidopsis MIK2 receptor elicits immunity by sensing a conserved signature from phytocytokines and microbes.</title>
        <authorList>
            <person name="Hou S."/>
            <person name="Liu D."/>
            <person name="Huang S."/>
            <person name="Luo D."/>
            <person name="Liu Z."/>
            <person name="Xiang Q."/>
            <person name="Wang P."/>
            <person name="Mu R."/>
            <person name="Han Z."/>
            <person name="Chen S."/>
            <person name="Chai J."/>
            <person name="Shan L."/>
            <person name="He P."/>
        </authorList>
    </citation>
    <scope>TISSUE SPECIFICITY</scope>
    <scope>GENE FAMILY</scope>
    <scope>NOMENCLATURE</scope>
    <source>
        <strain>cv. Columbia</strain>
    </source>
</reference>
<protein>
    <recommendedName>
        <fullName evidence="6 7">Serine rich endogenous peptide 9</fullName>
        <shortName evidence="6 7">AtSCOOP9</shortName>
    </recommendedName>
    <alternativeName>
        <fullName evidence="6 7">Phytocytokine SCOOP9</fullName>
    </alternativeName>
    <alternativeName>
        <fullName evidence="6 7">Precursor of serine rich endogenous peptide phytocytokine 9</fullName>
    </alternativeName>
</protein>
<organism>
    <name type="scientific">Arabidopsis thaliana</name>
    <name type="common">Mouse-ear cress</name>
    <dbReference type="NCBI Taxonomy" id="3702"/>
    <lineage>
        <taxon>Eukaryota</taxon>
        <taxon>Viridiplantae</taxon>
        <taxon>Streptophyta</taxon>
        <taxon>Embryophyta</taxon>
        <taxon>Tracheophyta</taxon>
        <taxon>Spermatophyta</taxon>
        <taxon>Magnoliopsida</taxon>
        <taxon>eudicotyledons</taxon>
        <taxon>Gunneridae</taxon>
        <taxon>Pentapetalae</taxon>
        <taxon>rosids</taxon>
        <taxon>malvids</taxon>
        <taxon>Brassicales</taxon>
        <taxon>Brassicaceae</taxon>
        <taxon>Camelineae</taxon>
        <taxon>Arabidopsis</taxon>
    </lineage>
</organism>